<keyword id="KW-0413">Isomerase</keyword>
<keyword id="KW-1185">Reference proteome</keyword>
<keyword id="KW-0819">tRNA processing</keyword>
<sequence>MYNGILPVFKDRGLTSHDVVFKLRKILKTKKVGHTGTLDPEVSGVLPICIGSATKVSDYIMEMGKTYKATVSLGITTTTEDQTGEILEQTAVNEQDVSAKSIDDVLQQFKGELIQIPPMYSSVKVNGKKLYEYARNNQVVERPERKVNIYQINRISDLRFVDDTCQFDMIVECGKGTYIRTLATDIGKALGLPAHMSKLTRTQSGGFDINESLTLEDIKSLHEHDTLLEKLFPIEYGLKGIEQILITDNAIKGKILNGQKFYKAEFKQNIDDIVIMVDNETHKVLAIYEPHPEKLDEIKPKKVFN</sequence>
<dbReference type="EC" id="5.4.99.25" evidence="1"/>
<dbReference type="EMBL" id="AP008934">
    <property type="protein sequence ID" value="BAE18639.1"/>
    <property type="molecule type" value="Genomic_DNA"/>
</dbReference>
<dbReference type="RefSeq" id="WP_011303253.1">
    <property type="nucleotide sequence ID" value="NZ_MTGA01000034.1"/>
</dbReference>
<dbReference type="SMR" id="Q49X59"/>
<dbReference type="GeneID" id="3617236"/>
<dbReference type="KEGG" id="ssp:SSP1494"/>
<dbReference type="PATRIC" id="fig|342451.11.peg.1497"/>
<dbReference type="eggNOG" id="COG0130">
    <property type="taxonomic scope" value="Bacteria"/>
</dbReference>
<dbReference type="HOGENOM" id="CLU_032087_0_1_9"/>
<dbReference type="OrthoDB" id="9802309at2"/>
<dbReference type="Proteomes" id="UP000006371">
    <property type="component" value="Chromosome"/>
</dbReference>
<dbReference type="GO" id="GO:0003723">
    <property type="term" value="F:RNA binding"/>
    <property type="evidence" value="ECO:0007669"/>
    <property type="project" value="InterPro"/>
</dbReference>
<dbReference type="GO" id="GO:0160148">
    <property type="term" value="F:tRNA pseudouridine(55) synthase activity"/>
    <property type="evidence" value="ECO:0007669"/>
    <property type="project" value="UniProtKB-EC"/>
</dbReference>
<dbReference type="GO" id="GO:1990481">
    <property type="term" value="P:mRNA pseudouridine synthesis"/>
    <property type="evidence" value="ECO:0007669"/>
    <property type="project" value="TreeGrafter"/>
</dbReference>
<dbReference type="GO" id="GO:0031119">
    <property type="term" value="P:tRNA pseudouridine synthesis"/>
    <property type="evidence" value="ECO:0007669"/>
    <property type="project" value="UniProtKB-UniRule"/>
</dbReference>
<dbReference type="CDD" id="cd02573">
    <property type="entry name" value="PseudoU_synth_EcTruB"/>
    <property type="match status" value="1"/>
</dbReference>
<dbReference type="FunFam" id="3.30.2350.10:FF:000011">
    <property type="entry name" value="tRNA pseudouridine synthase B"/>
    <property type="match status" value="1"/>
</dbReference>
<dbReference type="Gene3D" id="3.30.2350.10">
    <property type="entry name" value="Pseudouridine synthase"/>
    <property type="match status" value="1"/>
</dbReference>
<dbReference type="HAMAP" id="MF_01080">
    <property type="entry name" value="TruB_bact"/>
    <property type="match status" value="1"/>
</dbReference>
<dbReference type="InterPro" id="IPR020103">
    <property type="entry name" value="PsdUridine_synth_cat_dom_sf"/>
</dbReference>
<dbReference type="InterPro" id="IPR002501">
    <property type="entry name" value="PsdUridine_synth_N"/>
</dbReference>
<dbReference type="InterPro" id="IPR014780">
    <property type="entry name" value="tRNA_psdUridine_synth_TruB"/>
</dbReference>
<dbReference type="InterPro" id="IPR032819">
    <property type="entry name" value="TruB_C"/>
</dbReference>
<dbReference type="NCBIfam" id="TIGR00431">
    <property type="entry name" value="TruB"/>
    <property type="match status" value="1"/>
</dbReference>
<dbReference type="PANTHER" id="PTHR13767:SF2">
    <property type="entry name" value="PSEUDOURIDYLATE SYNTHASE TRUB1"/>
    <property type="match status" value="1"/>
</dbReference>
<dbReference type="PANTHER" id="PTHR13767">
    <property type="entry name" value="TRNA-PSEUDOURIDINE SYNTHASE"/>
    <property type="match status" value="1"/>
</dbReference>
<dbReference type="Pfam" id="PF16198">
    <property type="entry name" value="TruB_C_2"/>
    <property type="match status" value="1"/>
</dbReference>
<dbReference type="Pfam" id="PF01509">
    <property type="entry name" value="TruB_N"/>
    <property type="match status" value="1"/>
</dbReference>
<dbReference type="SUPFAM" id="SSF55120">
    <property type="entry name" value="Pseudouridine synthase"/>
    <property type="match status" value="1"/>
</dbReference>
<accession>Q49X59</accession>
<reference key="1">
    <citation type="journal article" date="2005" name="Proc. Natl. Acad. Sci. U.S.A.">
        <title>Whole genome sequence of Staphylococcus saprophyticus reveals the pathogenesis of uncomplicated urinary tract infection.</title>
        <authorList>
            <person name="Kuroda M."/>
            <person name="Yamashita A."/>
            <person name="Hirakawa H."/>
            <person name="Kumano M."/>
            <person name="Morikawa K."/>
            <person name="Higashide M."/>
            <person name="Maruyama A."/>
            <person name="Inose Y."/>
            <person name="Matoba K."/>
            <person name="Toh H."/>
            <person name="Kuhara S."/>
            <person name="Hattori M."/>
            <person name="Ohta T."/>
        </authorList>
    </citation>
    <scope>NUCLEOTIDE SEQUENCE [LARGE SCALE GENOMIC DNA]</scope>
    <source>
        <strain>ATCC 15305 / DSM 20229 / NCIMB 8711 / NCTC 7292 / S-41</strain>
    </source>
</reference>
<name>TRUB_STAS1</name>
<protein>
    <recommendedName>
        <fullName evidence="1">tRNA pseudouridine synthase B</fullName>
        <ecNumber evidence="1">5.4.99.25</ecNumber>
    </recommendedName>
    <alternativeName>
        <fullName evidence="1">tRNA pseudouridine(55) synthase</fullName>
        <shortName evidence="1">Psi55 synthase</shortName>
    </alternativeName>
    <alternativeName>
        <fullName evidence="1">tRNA pseudouridylate synthase</fullName>
    </alternativeName>
    <alternativeName>
        <fullName evidence="1">tRNA-uridine isomerase</fullName>
    </alternativeName>
</protein>
<organism>
    <name type="scientific">Staphylococcus saprophyticus subsp. saprophyticus (strain ATCC 15305 / DSM 20229 / NCIMB 8711 / NCTC 7292 / S-41)</name>
    <dbReference type="NCBI Taxonomy" id="342451"/>
    <lineage>
        <taxon>Bacteria</taxon>
        <taxon>Bacillati</taxon>
        <taxon>Bacillota</taxon>
        <taxon>Bacilli</taxon>
        <taxon>Bacillales</taxon>
        <taxon>Staphylococcaceae</taxon>
        <taxon>Staphylococcus</taxon>
    </lineage>
</organism>
<comment type="function">
    <text evidence="1">Responsible for synthesis of pseudouridine from uracil-55 in the psi GC loop of transfer RNAs.</text>
</comment>
<comment type="catalytic activity">
    <reaction evidence="1">
        <text>uridine(55) in tRNA = pseudouridine(55) in tRNA</text>
        <dbReference type="Rhea" id="RHEA:42532"/>
        <dbReference type="Rhea" id="RHEA-COMP:10101"/>
        <dbReference type="Rhea" id="RHEA-COMP:10102"/>
        <dbReference type="ChEBI" id="CHEBI:65314"/>
        <dbReference type="ChEBI" id="CHEBI:65315"/>
        <dbReference type="EC" id="5.4.99.25"/>
    </reaction>
</comment>
<comment type="similarity">
    <text evidence="1">Belongs to the pseudouridine synthase TruB family. Type 1 subfamily.</text>
</comment>
<gene>
    <name evidence="1" type="primary">truB</name>
    <name type="ordered locus">SSP1494</name>
</gene>
<feature type="chain" id="PRO_0000229386" description="tRNA pseudouridine synthase B">
    <location>
        <begin position="1"/>
        <end position="305"/>
    </location>
</feature>
<feature type="active site" description="Nucleophile" evidence="1">
    <location>
        <position position="39"/>
    </location>
</feature>
<proteinExistence type="inferred from homology"/>
<evidence type="ECO:0000255" key="1">
    <source>
        <dbReference type="HAMAP-Rule" id="MF_01080"/>
    </source>
</evidence>